<sequence>MVSPTKMIIRSPLKETDTNLKHNNGIAASTTAAGHLNVFSNDNNCNNNNTTESFPKKRSLERLELQQQQHLHEKKRARIERARSIEGAVQVSKGTGLKNVEPRVTPKELLEWQTNWKKIMKRDSRIYFDITDDVEMNTYNKSKMDKRRDLLKRGFLTLGAQITQFFDTTVTIVITRRSVENIYLLKDTDILSRAKKNYMKVWSYEKAARFLKNLDVDLDHLSKTKSASLAAPTLSNLLHNEKLYGPTDRDPRTKRDDIHYFKYPHVYLYDLWQTWAPIITLEWKPQELTNLDELPYPILKIGSFGRCPFIGDRNYDESSYKRVVKRYSRDKANKKYALQLRALFQYHADTLLNTSSVNDQTKNLIFIPHTCNDSTKSFKKWMQEKAKNFEKTELKKTDDSAVQDVRNEHADQTDEKNSILLNETETKEPPLKEEKENKQSIAEESNKYPQRKELAATPKLNHPVLATFARQETEEVPDDLCTLKTKSRQAFEIKASGAHQSNDVATSFGNGLGPTRASVMSKNMKSLSRLMVDRKLGVKQTNGNNKNYTATIATTAETSKENRHRLDFNALKKDEAPSKETGKDSAVHLETNRKPQNFPKVATKSVSADSKVHNDIKITTTESPTASKKSTSTNVTLHFNAQTAQTAQPVKKETVKNSGYCENCRVKYESLEQHIVSEKHLSFAENDLNFEAIDSLIENLRFQI</sequence>
<proteinExistence type="evidence at protein level"/>
<keyword id="KW-0002">3D-structure</keyword>
<keyword id="KW-0131">Cell cycle</keyword>
<keyword id="KW-0132">Cell division</keyword>
<keyword id="KW-0159">Chromosome partition</keyword>
<keyword id="KW-0235">DNA replication</keyword>
<keyword id="KW-0238">DNA-binding</keyword>
<keyword id="KW-0469">Meiosis</keyword>
<keyword id="KW-0479">Metal-binding</keyword>
<keyword id="KW-0498">Mitosis</keyword>
<keyword id="KW-0597">Phosphoprotein</keyword>
<keyword id="KW-1185">Reference proteome</keyword>
<keyword id="KW-0862">Zinc</keyword>
<keyword id="KW-0863">Zinc-finger</keyword>
<dbReference type="EMBL" id="X60279">
    <property type="protein sequence ID" value="CAA42819.1"/>
    <property type="molecule type" value="Genomic_DNA"/>
</dbReference>
<dbReference type="EMBL" id="M83539">
    <property type="protein sequence ID" value="AAA34573.1"/>
    <property type="molecule type" value="Genomic_DNA"/>
</dbReference>
<dbReference type="EMBL" id="X84162">
    <property type="protein sequence ID" value="CAA58969.1"/>
    <property type="molecule type" value="Genomic_DNA"/>
</dbReference>
<dbReference type="EMBL" id="Z49209">
    <property type="protein sequence ID" value="CAA89082.1"/>
    <property type="molecule type" value="Genomic_DNA"/>
</dbReference>
<dbReference type="EMBL" id="Z74348">
    <property type="protein sequence ID" value="CAA98869.1"/>
    <property type="molecule type" value="Genomic_DNA"/>
</dbReference>
<dbReference type="EMBL" id="BK006938">
    <property type="protein sequence ID" value="DAA11899.1"/>
    <property type="molecule type" value="Genomic_DNA"/>
</dbReference>
<dbReference type="PIR" id="S25371">
    <property type="entry name" value="S25371"/>
</dbReference>
<dbReference type="RefSeq" id="NP_010337.3">
    <property type="nucleotide sequence ID" value="NM_001180360.3"/>
</dbReference>
<dbReference type="PDB" id="3OQ0">
    <property type="method" value="X-ray"/>
    <property type="resolution" value="2.70 A"/>
    <property type="chains" value="A/B/C/D/E/F/G/H/I/J=120-250"/>
</dbReference>
<dbReference type="PDB" id="3OQ4">
    <property type="method" value="X-ray"/>
    <property type="resolution" value="2.40 A"/>
    <property type="chains" value="A/B/C/D/E=120-250"/>
</dbReference>
<dbReference type="PDB" id="3QBZ">
    <property type="method" value="X-ray"/>
    <property type="resolution" value="2.69 A"/>
    <property type="chains" value="A=66-221"/>
</dbReference>
<dbReference type="PDB" id="5T2F">
    <property type="method" value="X-ray"/>
    <property type="resolution" value="2.66 A"/>
    <property type="chains" value="A/B/C/D=105-220"/>
</dbReference>
<dbReference type="PDB" id="5T2S">
    <property type="method" value="X-ray"/>
    <property type="resolution" value="2.40 A"/>
    <property type="chains" value="A/C=105-220"/>
</dbReference>
<dbReference type="PDB" id="6MF6">
    <property type="method" value="X-ray"/>
    <property type="resolution" value="3.40 A"/>
    <property type="chains" value="C/D=76-96"/>
</dbReference>
<dbReference type="PDB" id="7P5Z">
    <property type="method" value="EM"/>
    <property type="resolution" value="3.30 A"/>
    <property type="chains" value="G=1-704"/>
</dbReference>
<dbReference type="PDB" id="7PT6">
    <property type="method" value="EM"/>
    <property type="resolution" value="3.20 A"/>
    <property type="chains" value="9/I=1-704"/>
</dbReference>
<dbReference type="PDB" id="7PT7">
    <property type="method" value="EM"/>
    <property type="resolution" value="3.80 A"/>
    <property type="chains" value="9=1-704"/>
</dbReference>
<dbReference type="PDB" id="7V3V">
    <property type="method" value="EM"/>
    <property type="resolution" value="2.90 A"/>
    <property type="chains" value="I=1-704"/>
</dbReference>
<dbReference type="PDBsum" id="3OQ0"/>
<dbReference type="PDBsum" id="3OQ4"/>
<dbReference type="PDBsum" id="3QBZ"/>
<dbReference type="PDBsum" id="5T2F"/>
<dbReference type="PDBsum" id="5T2S"/>
<dbReference type="PDBsum" id="6MF6"/>
<dbReference type="PDBsum" id="7P5Z"/>
<dbReference type="PDBsum" id="7PT6"/>
<dbReference type="PDBsum" id="7PT7"/>
<dbReference type="PDBsum" id="7V3V"/>
<dbReference type="EMDB" id="EMD-13211"/>
<dbReference type="EMDB" id="EMD-13619"/>
<dbReference type="EMDB" id="EMD-13620"/>
<dbReference type="EMDB" id="EMD-13624"/>
<dbReference type="EMDB" id="EMD-13629"/>
<dbReference type="EMDB" id="EMD-13640"/>
<dbReference type="EMDB" id="EMD-13644"/>
<dbReference type="EMDB" id="EMD-13647"/>
<dbReference type="EMDB" id="EMD-13648"/>
<dbReference type="EMDB" id="EMD-13656"/>
<dbReference type="EMDB" id="EMD-31685"/>
<dbReference type="SMR" id="P32325"/>
<dbReference type="BioGRID" id="32106">
    <property type="interactions" value="839"/>
</dbReference>
<dbReference type="ComplexPortal" id="CPX-867">
    <property type="entry name" value="DBF4-dependent CDC7 kinase complex"/>
</dbReference>
<dbReference type="DIP" id="DIP-2290N"/>
<dbReference type="FunCoup" id="P32325">
    <property type="interactions" value="300"/>
</dbReference>
<dbReference type="IntAct" id="P32325">
    <property type="interactions" value="6"/>
</dbReference>
<dbReference type="MINT" id="P32325"/>
<dbReference type="STRING" id="4932.YDR052C"/>
<dbReference type="MoonDB" id="P32325">
    <property type="type" value="Predicted"/>
</dbReference>
<dbReference type="iPTMnet" id="P32325"/>
<dbReference type="PaxDb" id="4932-YDR052C"/>
<dbReference type="PeptideAtlas" id="P32325"/>
<dbReference type="EnsemblFungi" id="YDR052C_mRNA">
    <property type="protein sequence ID" value="YDR052C"/>
    <property type="gene ID" value="YDR052C"/>
</dbReference>
<dbReference type="GeneID" id="851623"/>
<dbReference type="KEGG" id="sce:YDR052C"/>
<dbReference type="AGR" id="SGD:S000002459"/>
<dbReference type="SGD" id="S000002459">
    <property type="gene designation" value="DBF4"/>
</dbReference>
<dbReference type="VEuPathDB" id="FungiDB:YDR052C"/>
<dbReference type="eggNOG" id="KOG4139">
    <property type="taxonomic scope" value="Eukaryota"/>
</dbReference>
<dbReference type="GeneTree" id="ENSGT00530000063909"/>
<dbReference type="HOGENOM" id="CLU_023948_0_0_1"/>
<dbReference type="InParanoid" id="P32325"/>
<dbReference type="OMA" id="IITLEWK"/>
<dbReference type="OrthoDB" id="21380at2759"/>
<dbReference type="BioCyc" id="YEAST:G3O-29662-MONOMER"/>
<dbReference type="Reactome" id="R-SCE-176187">
    <property type="pathway name" value="Activation of ATR in response to replication stress"/>
</dbReference>
<dbReference type="Reactome" id="R-SCE-68962">
    <property type="pathway name" value="Activation of the pre-replicative complex"/>
</dbReference>
<dbReference type="BioGRID-ORCS" id="851623">
    <property type="hits" value="1 hit in 10 CRISPR screens"/>
</dbReference>
<dbReference type="EvolutionaryTrace" id="P32325"/>
<dbReference type="PRO" id="PR:P32325"/>
<dbReference type="Proteomes" id="UP000002311">
    <property type="component" value="Chromosome IV"/>
</dbReference>
<dbReference type="RNAct" id="P32325">
    <property type="molecule type" value="protein"/>
</dbReference>
<dbReference type="GO" id="GO:0005813">
    <property type="term" value="C:centrosome"/>
    <property type="evidence" value="ECO:0000314"/>
    <property type="project" value="ComplexPortal"/>
</dbReference>
<dbReference type="GO" id="GO:0000785">
    <property type="term" value="C:chromatin"/>
    <property type="evidence" value="ECO:0000314"/>
    <property type="project" value="SGD"/>
</dbReference>
<dbReference type="GO" id="GO:0000775">
    <property type="term" value="C:chromosome, centromeric region"/>
    <property type="evidence" value="ECO:0000314"/>
    <property type="project" value="SGD"/>
</dbReference>
<dbReference type="GO" id="GO:0005737">
    <property type="term" value="C:cytoplasm"/>
    <property type="evidence" value="ECO:0007005"/>
    <property type="project" value="SGD"/>
</dbReference>
<dbReference type="GO" id="GO:0031431">
    <property type="term" value="C:Dbf4-dependent protein kinase complex"/>
    <property type="evidence" value="ECO:0000314"/>
    <property type="project" value="SGD"/>
</dbReference>
<dbReference type="GO" id="GO:0005634">
    <property type="term" value="C:nucleus"/>
    <property type="evidence" value="ECO:0000314"/>
    <property type="project" value="ComplexPortal"/>
</dbReference>
<dbReference type="GO" id="GO:0003688">
    <property type="term" value="F:DNA replication origin binding"/>
    <property type="evidence" value="ECO:0000314"/>
    <property type="project" value="SGD"/>
</dbReference>
<dbReference type="GO" id="GO:0043539">
    <property type="term" value="F:protein serine/threonine kinase activator activity"/>
    <property type="evidence" value="ECO:0000315"/>
    <property type="project" value="SGD"/>
</dbReference>
<dbReference type="GO" id="GO:0008270">
    <property type="term" value="F:zinc ion binding"/>
    <property type="evidence" value="ECO:0007669"/>
    <property type="project" value="UniProtKB-KW"/>
</dbReference>
<dbReference type="GO" id="GO:0051301">
    <property type="term" value="P:cell division"/>
    <property type="evidence" value="ECO:0007669"/>
    <property type="project" value="UniProtKB-KW"/>
</dbReference>
<dbReference type="GO" id="GO:0007059">
    <property type="term" value="P:chromosome segregation"/>
    <property type="evidence" value="ECO:0007669"/>
    <property type="project" value="UniProtKB-KW"/>
</dbReference>
<dbReference type="GO" id="GO:0006270">
    <property type="term" value="P:DNA replication initiation"/>
    <property type="evidence" value="ECO:0000314"/>
    <property type="project" value="ComplexPortal"/>
</dbReference>
<dbReference type="GO" id="GO:0033314">
    <property type="term" value="P:mitotic DNA replication checkpoint signaling"/>
    <property type="evidence" value="ECO:0000316"/>
    <property type="project" value="SGD"/>
</dbReference>
<dbReference type="GO" id="GO:0001100">
    <property type="term" value="P:negative regulation of exit from mitosis"/>
    <property type="evidence" value="ECO:0000315"/>
    <property type="project" value="SGD"/>
</dbReference>
<dbReference type="GO" id="GO:1903468">
    <property type="term" value="P:positive regulation of DNA replication initiation"/>
    <property type="evidence" value="ECO:0000316"/>
    <property type="project" value="SGD"/>
</dbReference>
<dbReference type="GO" id="GO:1905561">
    <property type="term" value="P:positive regulation of kinetochore assembly"/>
    <property type="evidence" value="ECO:0000314"/>
    <property type="project" value="ComplexPortal"/>
</dbReference>
<dbReference type="GO" id="GO:0060903">
    <property type="term" value="P:positive regulation of meiosis I"/>
    <property type="evidence" value="ECO:0000314"/>
    <property type="project" value="ComplexPortal"/>
</dbReference>
<dbReference type="GO" id="GO:1903343">
    <property type="term" value="P:positive regulation of meiotic DNA double-strand break formation"/>
    <property type="evidence" value="ECO:0000314"/>
    <property type="project" value="ComplexPortal"/>
</dbReference>
<dbReference type="GO" id="GO:0010571">
    <property type="term" value="P:positive regulation of nuclear cell cycle DNA replication"/>
    <property type="evidence" value="ECO:0000318"/>
    <property type="project" value="GO_Central"/>
</dbReference>
<dbReference type="GO" id="GO:0006279">
    <property type="term" value="P:premeiotic DNA replication"/>
    <property type="evidence" value="ECO:0000315"/>
    <property type="project" value="SGD"/>
</dbReference>
<dbReference type="GO" id="GO:1901987">
    <property type="term" value="P:regulation of cell cycle phase transition"/>
    <property type="evidence" value="ECO:0000318"/>
    <property type="project" value="GO_Central"/>
</dbReference>
<dbReference type="FunFam" id="3.40.50.10190:FF:000089">
    <property type="entry name" value="DDK kinase regulatory subunit DBF4"/>
    <property type="match status" value="1"/>
</dbReference>
<dbReference type="FunFam" id="6.10.250.3410:FF:000001">
    <property type="entry name" value="Protein DBF4 homolog A"/>
    <property type="match status" value="1"/>
</dbReference>
<dbReference type="Gene3D" id="3.40.50.10190">
    <property type="entry name" value="BRCT domain"/>
    <property type="match status" value="1"/>
</dbReference>
<dbReference type="Gene3D" id="6.10.250.3410">
    <property type="entry name" value="DBF zinc finger"/>
    <property type="match status" value="1"/>
</dbReference>
<dbReference type="InterPro" id="IPR036420">
    <property type="entry name" value="BRCT_dom_sf"/>
</dbReference>
<dbReference type="InterPro" id="IPR055116">
    <property type="entry name" value="DBF4_BRCT"/>
</dbReference>
<dbReference type="InterPro" id="IPR013939">
    <property type="entry name" value="Regulatory_Dfp1/Him1"/>
</dbReference>
<dbReference type="InterPro" id="IPR051590">
    <property type="entry name" value="Replication_Regulatory_Kinase"/>
</dbReference>
<dbReference type="InterPro" id="IPR006572">
    <property type="entry name" value="Znf_DBF"/>
</dbReference>
<dbReference type="InterPro" id="IPR038545">
    <property type="entry name" value="Znf_DBF_sf"/>
</dbReference>
<dbReference type="PANTHER" id="PTHR15375">
    <property type="entry name" value="ACTIVATOR OF S-PHASE KINASE-RELATED"/>
    <property type="match status" value="1"/>
</dbReference>
<dbReference type="PANTHER" id="PTHR15375:SF26">
    <property type="entry name" value="PROTEIN CHIFFON"/>
    <property type="match status" value="1"/>
</dbReference>
<dbReference type="Pfam" id="PF22437">
    <property type="entry name" value="DBF4_BRCT"/>
    <property type="match status" value="1"/>
</dbReference>
<dbReference type="Pfam" id="PF08630">
    <property type="entry name" value="Dfp1_Him1_M"/>
    <property type="match status" value="1"/>
</dbReference>
<dbReference type="Pfam" id="PF07535">
    <property type="entry name" value="zf-DBF"/>
    <property type="match status" value="1"/>
</dbReference>
<dbReference type="SMART" id="SM00586">
    <property type="entry name" value="ZnF_DBF"/>
    <property type="match status" value="1"/>
</dbReference>
<dbReference type="PROSITE" id="PS51265">
    <property type="entry name" value="ZF_DBF4"/>
    <property type="match status" value="1"/>
</dbReference>
<organism>
    <name type="scientific">Saccharomyces cerevisiae (strain ATCC 204508 / S288c)</name>
    <name type="common">Baker's yeast</name>
    <dbReference type="NCBI Taxonomy" id="559292"/>
    <lineage>
        <taxon>Eukaryota</taxon>
        <taxon>Fungi</taxon>
        <taxon>Dikarya</taxon>
        <taxon>Ascomycota</taxon>
        <taxon>Saccharomycotina</taxon>
        <taxon>Saccharomycetes</taxon>
        <taxon>Saccharomycetales</taxon>
        <taxon>Saccharomycetaceae</taxon>
        <taxon>Saccharomyces</taxon>
    </lineage>
</organism>
<gene>
    <name type="primary">DBF4</name>
    <name type="synonym">DNA52</name>
    <name type="ordered locus">YDR052C</name>
    <name type="ORF">D4205</name>
    <name type="ORF">YD9609.07C</name>
</gene>
<evidence type="ECO:0000255" key="1">
    <source>
        <dbReference type="PROSITE-ProRule" id="PRU00600"/>
    </source>
</evidence>
<evidence type="ECO:0000256" key="2">
    <source>
        <dbReference type="SAM" id="MobiDB-lite"/>
    </source>
</evidence>
<evidence type="ECO:0000269" key="3">
    <source>
    </source>
</evidence>
<evidence type="ECO:0000269" key="4">
    <source>
    </source>
</evidence>
<evidence type="ECO:0000269" key="5">
    <source>
    </source>
</evidence>
<evidence type="ECO:0000269" key="6">
    <source>
    </source>
</evidence>
<evidence type="ECO:0000269" key="7">
    <source>
    </source>
</evidence>
<evidence type="ECO:0000269" key="8">
    <source>
    </source>
</evidence>
<evidence type="ECO:0000269" key="9">
    <source>
    </source>
</evidence>
<evidence type="ECO:0000269" key="10">
    <source>
    </source>
</evidence>
<evidence type="ECO:0000269" key="11">
    <source>
    </source>
</evidence>
<evidence type="ECO:0000269" key="12">
    <source>
    </source>
</evidence>
<evidence type="ECO:0000269" key="13">
    <source>
    </source>
</evidence>
<evidence type="ECO:0000269" key="14">
    <source>
    </source>
</evidence>
<evidence type="ECO:0000269" key="15">
    <source>
    </source>
</evidence>
<evidence type="ECO:0000269" key="16">
    <source>
    </source>
</evidence>
<evidence type="ECO:0000269" key="17">
    <source>
    </source>
</evidence>
<evidence type="ECO:0000305" key="18"/>
<evidence type="ECO:0007744" key="19">
    <source>
    </source>
</evidence>
<evidence type="ECO:0007744" key="20">
    <source>
    </source>
</evidence>
<evidence type="ECO:0007829" key="21">
    <source>
        <dbReference type="PDB" id="3OQ4"/>
    </source>
</evidence>
<evidence type="ECO:0007829" key="22">
    <source>
        <dbReference type="PDB" id="5T2S"/>
    </source>
</evidence>
<evidence type="ECO:0007829" key="23">
    <source>
        <dbReference type="PDB" id="6MF6"/>
    </source>
</evidence>
<reference key="1">
    <citation type="journal article" date="1992" name="Genetics">
        <title>Temperature-sensitive cdc7 mutations of Saccharomyces cerevisiae are suppressed by the DBF4 gene, which is required for the G1/S cell cycle transition.</title>
        <authorList>
            <person name="Kitada K."/>
            <person name="Johnston L.H."/>
            <person name="Sugino T."/>
            <person name="Sugino A."/>
        </authorList>
    </citation>
    <scope>NUCLEOTIDE SEQUENCE [GENOMIC DNA]</scope>
    <source>
        <strain>ATCC 204626 / S288c / A364A</strain>
    </source>
</reference>
<reference key="2">
    <citation type="journal article" date="1992" name="Yeast">
        <title>Genetic and molecular analysis of DNA43 and DNA52: two new cell-cycle genes in Saccharomyces cerevisiae.</title>
        <authorList>
            <person name="Solomon N.A."/>
            <person name="Wright M.B."/>
            <person name="Chang S."/>
            <person name="Buckley A.M."/>
            <person name="Dumas L.B."/>
            <person name="Gaber R.F."/>
        </authorList>
    </citation>
    <scope>NUCLEOTIDE SEQUENCE [GENOMIC DNA]</scope>
</reference>
<reference key="3">
    <citation type="journal article" date="1996" name="Yeast">
        <title>Nucleotide sequence analysis of a 32,500 bp region of the right arm of Saccharomyces cerevisiae chromosome IV.</title>
        <authorList>
            <person name="Brandt P."/>
            <person name="Ramlow S."/>
            <person name="Otto B."/>
            <person name="Bloecker H."/>
        </authorList>
    </citation>
    <scope>NUCLEOTIDE SEQUENCE [GENOMIC DNA]</scope>
    <source>
        <strain>ATCC 204508 / S288c</strain>
    </source>
</reference>
<reference key="4">
    <citation type="journal article" date="1997" name="Nature">
        <title>The nucleotide sequence of Saccharomyces cerevisiae chromosome IV.</title>
        <authorList>
            <person name="Jacq C."/>
            <person name="Alt-Moerbe J."/>
            <person name="Andre B."/>
            <person name="Arnold W."/>
            <person name="Bahr A."/>
            <person name="Ballesta J.P.G."/>
            <person name="Bargues M."/>
            <person name="Baron L."/>
            <person name="Becker A."/>
            <person name="Biteau N."/>
            <person name="Bloecker H."/>
            <person name="Blugeon C."/>
            <person name="Boskovic J."/>
            <person name="Brandt P."/>
            <person name="Brueckner M."/>
            <person name="Buitrago M.J."/>
            <person name="Coster F."/>
            <person name="Delaveau T."/>
            <person name="del Rey F."/>
            <person name="Dujon B."/>
            <person name="Eide L.G."/>
            <person name="Garcia-Cantalejo J.M."/>
            <person name="Goffeau A."/>
            <person name="Gomez-Peris A."/>
            <person name="Granotier C."/>
            <person name="Hanemann V."/>
            <person name="Hankeln T."/>
            <person name="Hoheisel J.D."/>
            <person name="Jaeger W."/>
            <person name="Jimenez A."/>
            <person name="Jonniaux J.-L."/>
            <person name="Kraemer C."/>
            <person name="Kuester H."/>
            <person name="Laamanen P."/>
            <person name="Legros Y."/>
            <person name="Louis E.J."/>
            <person name="Moeller-Rieker S."/>
            <person name="Monnet A."/>
            <person name="Moro M."/>
            <person name="Mueller-Auer S."/>
            <person name="Nussbaumer B."/>
            <person name="Paricio N."/>
            <person name="Paulin L."/>
            <person name="Perea J."/>
            <person name="Perez-Alonso M."/>
            <person name="Perez-Ortin J.E."/>
            <person name="Pohl T.M."/>
            <person name="Prydz H."/>
            <person name="Purnelle B."/>
            <person name="Rasmussen S.W."/>
            <person name="Remacha M.A."/>
            <person name="Revuelta J.L."/>
            <person name="Rieger M."/>
            <person name="Salom D."/>
            <person name="Saluz H.P."/>
            <person name="Saiz J.E."/>
            <person name="Saren A.-M."/>
            <person name="Schaefer M."/>
            <person name="Scharfe M."/>
            <person name="Schmidt E.R."/>
            <person name="Schneider C."/>
            <person name="Scholler P."/>
            <person name="Schwarz S."/>
            <person name="Soler-Mira A."/>
            <person name="Urrestarazu L.A."/>
            <person name="Verhasselt P."/>
            <person name="Vissers S."/>
            <person name="Voet M."/>
            <person name="Volckaert G."/>
            <person name="Wagner G."/>
            <person name="Wambutt R."/>
            <person name="Wedler E."/>
            <person name="Wedler H."/>
            <person name="Woelfl S."/>
            <person name="Harris D.E."/>
            <person name="Bowman S."/>
            <person name="Brown D."/>
            <person name="Churcher C.M."/>
            <person name="Connor R."/>
            <person name="Dedman K."/>
            <person name="Gentles S."/>
            <person name="Hamlin N."/>
            <person name="Hunt S."/>
            <person name="Jones L."/>
            <person name="McDonald S."/>
            <person name="Murphy L.D."/>
            <person name="Niblett D."/>
            <person name="Odell C."/>
            <person name="Oliver K."/>
            <person name="Rajandream M.A."/>
            <person name="Richards C."/>
            <person name="Shore L."/>
            <person name="Walsh S.V."/>
            <person name="Barrell B.G."/>
            <person name="Dietrich F.S."/>
            <person name="Mulligan J.T."/>
            <person name="Allen E."/>
            <person name="Araujo R."/>
            <person name="Aviles E."/>
            <person name="Berno A."/>
            <person name="Carpenter J."/>
            <person name="Chen E."/>
            <person name="Cherry J.M."/>
            <person name="Chung E."/>
            <person name="Duncan M."/>
            <person name="Hunicke-Smith S."/>
            <person name="Hyman R.W."/>
            <person name="Komp C."/>
            <person name="Lashkari D."/>
            <person name="Lew H."/>
            <person name="Lin D."/>
            <person name="Mosedale D."/>
            <person name="Nakahara K."/>
            <person name="Namath A."/>
            <person name="Oefner P."/>
            <person name="Oh C."/>
            <person name="Petel F.X."/>
            <person name="Roberts D."/>
            <person name="Schramm S."/>
            <person name="Schroeder M."/>
            <person name="Shogren T."/>
            <person name="Shroff N."/>
            <person name="Winant A."/>
            <person name="Yelton M.A."/>
            <person name="Botstein D."/>
            <person name="Davis R.W."/>
            <person name="Johnston M."/>
            <person name="Andrews S."/>
            <person name="Brinkman R."/>
            <person name="Cooper J."/>
            <person name="Ding H."/>
            <person name="Du Z."/>
            <person name="Favello A."/>
            <person name="Fulton L."/>
            <person name="Gattung S."/>
            <person name="Greco T."/>
            <person name="Hallsworth K."/>
            <person name="Hawkins J."/>
            <person name="Hillier L.W."/>
            <person name="Jier M."/>
            <person name="Johnson D."/>
            <person name="Johnston L."/>
            <person name="Kirsten J."/>
            <person name="Kucaba T."/>
            <person name="Langston Y."/>
            <person name="Latreille P."/>
            <person name="Le T."/>
            <person name="Mardis E."/>
            <person name="Menezes S."/>
            <person name="Miller N."/>
            <person name="Nhan M."/>
            <person name="Pauley A."/>
            <person name="Peluso D."/>
            <person name="Rifkin L."/>
            <person name="Riles L."/>
            <person name="Taich A."/>
            <person name="Trevaskis E."/>
            <person name="Vignati D."/>
            <person name="Wilcox L."/>
            <person name="Wohldman P."/>
            <person name="Vaudin M."/>
            <person name="Wilson R."/>
            <person name="Waterston R."/>
            <person name="Albermann K."/>
            <person name="Hani J."/>
            <person name="Heumann K."/>
            <person name="Kleine K."/>
            <person name="Mewes H.-W."/>
            <person name="Zollner A."/>
            <person name="Zaccaria P."/>
        </authorList>
    </citation>
    <scope>NUCLEOTIDE SEQUENCE [LARGE SCALE GENOMIC DNA]</scope>
    <source>
        <strain>ATCC 204508 / S288c</strain>
    </source>
</reference>
<reference key="5">
    <citation type="journal article" date="2014" name="G3 (Bethesda)">
        <title>The reference genome sequence of Saccharomyces cerevisiae: Then and now.</title>
        <authorList>
            <person name="Engel S.R."/>
            <person name="Dietrich F.S."/>
            <person name="Fisk D.G."/>
            <person name="Binkley G."/>
            <person name="Balakrishnan R."/>
            <person name="Costanzo M.C."/>
            <person name="Dwight S.S."/>
            <person name="Hitz B.C."/>
            <person name="Karra K."/>
            <person name="Nash R.S."/>
            <person name="Weng S."/>
            <person name="Wong E.D."/>
            <person name="Lloyd P."/>
            <person name="Skrzypek M.S."/>
            <person name="Miyasato S.R."/>
            <person name="Simison M."/>
            <person name="Cherry J.M."/>
        </authorList>
    </citation>
    <scope>GENOME REANNOTATION</scope>
    <source>
        <strain>ATCC 204508 / S288c</strain>
    </source>
</reference>
<reference key="6">
    <citation type="journal article" date="1993" name="Mol. Cell. Biol.">
        <title>Cell cycle regulation of the yeast Cdc7 protein kinase by association with the Dbf4 protein.</title>
        <authorList>
            <person name="Jackson A.L."/>
            <person name="Pahl P.M."/>
            <person name="Harrison K."/>
            <person name="Rosamond J."/>
            <person name="Sclafani R.A."/>
        </authorList>
    </citation>
    <scope>CHARACTERIZATION</scope>
</reference>
<reference key="7">
    <citation type="journal article" date="1994" name="Science">
        <title>Interaction of Dbf4, the Cdc7 protein kinase regulatory subunit, with yeast replication origins in vivo.</title>
        <authorList>
            <person name="Dowell S.J."/>
            <person name="Romanowski P."/>
            <person name="Diffley J.F."/>
        </authorList>
    </citation>
    <scope>FUNCTION</scope>
    <scope>DNA-BINDING</scope>
</reference>
<reference key="8">
    <citation type="journal article" date="1996" name="Mol. Cell. Biol.">
        <title>A novel role for Cdc5p in DNA replication.</title>
        <authorList>
            <person name="Hardy C.F."/>
            <person name="Pautz A."/>
        </authorList>
    </citation>
    <scope>INTERACTION WITH CDC5</scope>
    <scope>PHOSPHORYLATION</scope>
</reference>
<reference key="9">
    <citation type="journal article" date="1999" name="Mol. Cell. Biol.">
        <title>Cell cycle regulation of DNA replication initiator factor Dbf4p.</title>
        <authorList>
            <person name="Cheng L."/>
            <person name="Collyer T."/>
            <person name="Hardy C.F."/>
        </authorList>
    </citation>
    <scope>INDUCTION</scope>
</reference>
<reference key="10">
    <citation type="journal article" date="1999" name="Mol. Cell. Biol.">
        <title>Cell cycle control of Cdc7p kinase activity through regulation of Dbf4p stability.</title>
        <authorList>
            <person name="Oshiro G."/>
            <person name="Owens J.C."/>
            <person name="Shellman Y."/>
            <person name="Sclafani R.A."/>
            <person name="Li J.J."/>
        </authorList>
    </citation>
    <scope>INDUCTION</scope>
</reference>
<reference key="11">
    <citation type="journal article" date="2002" name="Proc. Natl. Acad. Sci. U.S.A.">
        <title>An N-terminal domain of Dbf4p mediates interaction with both origin recognition complex (ORC) and Rad53p and can deregulate late origin firing.</title>
        <authorList>
            <person name="Duncker B.P."/>
            <person name="Shimada K."/>
            <person name="Tsai-Pflugfelder M."/>
            <person name="Pasero P."/>
            <person name="Gasser S.M."/>
        </authorList>
    </citation>
    <scope>FUNCTION</scope>
    <scope>INTERACTION WITH ORC2; ORC3 AND RAD53</scope>
</reference>
<reference key="12">
    <citation type="journal article" date="2006" name="J. Biol. Chem.">
        <title>Dual role of the Cdc7-regulatory protein Dbf4 during yeast meiosis.</title>
        <authorList>
            <person name="Valentin G."/>
            <person name="Schwob E."/>
            <person name="Della Seta F."/>
        </authorList>
    </citation>
    <scope>FUNCTION IN MEIOTIC REPLICATION</scope>
</reference>
<reference key="13">
    <citation type="journal article" date="2006" name="Mol. Cell">
        <title>Cdc7-Dbf4 phosphorylates MCM proteins via a docking site-mediated mechanism to promote S phase progression.</title>
        <authorList>
            <person name="Sheu Y.-J."/>
            <person name="Stillman B."/>
        </authorList>
    </citation>
    <scope>FUNCTION</scope>
</reference>
<reference key="14">
    <citation type="journal article" date="2007" name="Proc. Natl. Acad. Sci. U.S.A.">
        <title>Analysis of phosphorylation sites on proteins from Saccharomyces cerevisiae by electron transfer dissociation (ETD) mass spectrometry.</title>
        <authorList>
            <person name="Chi A."/>
            <person name="Huttenhower C."/>
            <person name="Geer L.Y."/>
            <person name="Coon J.J."/>
            <person name="Syka J.E.P."/>
            <person name="Bai D.L."/>
            <person name="Shabanowitz J."/>
            <person name="Burke D.J."/>
            <person name="Troyanskaya O.G."/>
            <person name="Hunt D.F."/>
        </authorList>
    </citation>
    <scope>PHOSPHORYLATION [LARGE SCALE ANALYSIS] AT SER-59 AND SER-84</scope>
    <scope>IDENTIFICATION BY MASS SPECTROMETRY [LARGE SCALE ANALYSIS]</scope>
</reference>
<reference key="15">
    <citation type="journal article" date="2008" name="Cell">
        <title>Dbf4-dependent CDC7 kinase links DNA replication to the segregation of homologous chromosomes in meiosis I.</title>
        <authorList>
            <person name="Matos J."/>
            <person name="Lipp J.J."/>
            <person name="Bogdanova A."/>
            <person name="Guillot S."/>
            <person name="Okaz E."/>
            <person name="Junqueira M."/>
            <person name="Shevchenko A."/>
            <person name="Zachariae W."/>
        </authorList>
    </citation>
    <scope>FUNCTION IN MEIOTIC SPINDLE ORIENTATION</scope>
</reference>
<reference key="16">
    <citation type="journal article" date="2008" name="Genes Dev.">
        <title>Cdc28-Clb5 (CDK-S) and Cdc7-Dbf4 (DDK) collaborate to initiate meiotic recombination in yeast.</title>
        <authorList>
            <person name="Wan L."/>
            <person name="Niu H."/>
            <person name="Futcher B."/>
            <person name="Zhang C."/>
            <person name="Shokat K.M."/>
            <person name="Boulton S.J."/>
            <person name="Hollingsworth N.M."/>
        </authorList>
    </citation>
    <scope>FUNCTION IN MEIOTIC RECOMBINATION</scope>
</reference>
<reference key="17">
    <citation type="journal article" date="2008" name="Mol. Cell. Proteomics">
        <title>A multidimensional chromatography technology for in-depth phosphoproteome analysis.</title>
        <authorList>
            <person name="Albuquerque C.P."/>
            <person name="Smolka M.B."/>
            <person name="Payne S.H."/>
            <person name="Bafna V."/>
            <person name="Eng J."/>
            <person name="Zhou H."/>
        </authorList>
    </citation>
    <scope>PHOSPHORYLATION [LARGE SCALE ANALYSIS] AT SER-235 AND SER-623</scope>
    <scope>IDENTIFICATION BY MASS SPECTROMETRY [LARGE SCALE ANALYSIS]</scope>
</reference>
<reference key="18">
    <citation type="journal article" date="2009" name="J. Biol. Chem.">
        <title>Dbf4-Cdc7 phosphorylation of Mcm2 is required for cell growth.</title>
        <authorList>
            <person name="Bruck I."/>
            <person name="Kaplan D."/>
        </authorList>
    </citation>
    <scope>FUNCTION</scope>
    <scope>INTERACTION WITH MCM2</scope>
</reference>
<reference key="19">
    <citation type="journal article" date="2009" name="PLoS Genet.">
        <title>Cdc7p-Dbf4p regulates mitotic exit by inhibiting Polo kinase.</title>
        <authorList>
            <person name="Miller C.T."/>
            <person name="Gabrielse C."/>
            <person name="Chen Y.-C."/>
            <person name="Weinreich M."/>
        </authorList>
    </citation>
    <scope>FUNCTION</scope>
    <scope>INTERACTION WITH CDC5</scope>
</reference>
<reference key="20">
    <citation type="journal article" date="2010" name="Cell Cycle">
        <title>The Dbf4 motif C zinc finger promotes DNA replication and mediates resistance to genotoxic stress.</title>
        <authorList>
            <person name="Jones D.R."/>
            <person name="Prasad A.A."/>
            <person name="Chan P.K."/>
            <person name="Duncker B.P."/>
        </authorList>
    </citation>
    <scope>FUNCTION</scope>
    <scope>MUTAGENESIS OF CYS-661; CYS-664; HIS-674 AND HIS-680</scope>
</reference>
<reference key="21">
    <citation type="journal article" date="2010" name="J. Biol. Chem.">
        <title>Dbf4 regulates the Cdc5 polo-like kinase through a distinct non-canonical binding interaction.</title>
        <authorList>
            <person name="Chen Y.-C."/>
            <person name="Weinreich M."/>
        </authorList>
    </citation>
    <scope>FUNCTION</scope>
    <scope>INTERACTION WITH CDC5</scope>
    <scope>MUTAGENESIS OF ARG-83; SER-84; ILE-85; GLU-86; GLY-87 AND ALA-88</scope>
</reference>
<reference key="22">
    <citation type="journal article" date="2010" name="Methods">
        <title>Methods to study kinase regulation of the replication fork helicase.</title>
        <authorList>
            <person name="Kaplan D.L."/>
            <person name="Bruck I."/>
        </authorList>
    </citation>
    <scope>FUNCTION</scope>
    <scope>SUBUNIT</scope>
</reference>
<reference key="23">
    <citation type="journal article" date="2010" name="Nature">
        <title>The Dbf4-Cdc7 kinase promotes S phase by alleviating an inhibitory activity in Mcm4.</title>
        <authorList>
            <person name="Sheu Y.-J."/>
            <person name="Stillman B."/>
        </authorList>
    </citation>
    <scope>FUNCTION IN REPLICATION INITIATION</scope>
</reference>
<protein>
    <recommendedName>
        <fullName>DDK kinase regulatory subunit DBF4</fullName>
    </recommendedName>
    <alternativeName>
        <fullName>Dumbbell forming protein 4</fullName>
    </alternativeName>
</protein>
<feature type="chain" id="PRO_0000079791" description="DDK kinase regulatory subunit DBF4">
    <location>
        <begin position="1"/>
        <end position="704"/>
    </location>
</feature>
<feature type="zinc finger region" description="DBF4-type" evidence="1">
    <location>
        <begin position="654"/>
        <end position="703"/>
    </location>
</feature>
<feature type="region of interest" description="D box 1">
    <location>
        <begin position="10"/>
        <end position="19"/>
    </location>
</feature>
<feature type="region of interest" description="D box 2">
    <location>
        <begin position="62"/>
        <end position="70"/>
    </location>
</feature>
<feature type="region of interest" description="Disordered" evidence="2">
    <location>
        <begin position="397"/>
        <end position="453"/>
    </location>
</feature>
<feature type="short sequence motif" description="POLO box domain (PBD)-binding">
    <location>
        <begin position="83"/>
        <end position="88"/>
    </location>
</feature>
<feature type="compositionally biased region" description="Basic and acidic residues" evidence="2">
    <location>
        <begin position="397"/>
        <end position="417"/>
    </location>
</feature>
<feature type="compositionally biased region" description="Basic and acidic residues" evidence="2">
    <location>
        <begin position="424"/>
        <end position="438"/>
    </location>
</feature>
<feature type="compositionally biased region" description="Basic and acidic residues" evidence="2">
    <location>
        <begin position="444"/>
        <end position="453"/>
    </location>
</feature>
<feature type="binding site" evidence="1">
    <location>
        <position position="661"/>
    </location>
    <ligand>
        <name>Zn(2+)</name>
        <dbReference type="ChEBI" id="CHEBI:29105"/>
    </ligand>
</feature>
<feature type="binding site" evidence="1">
    <location>
        <position position="664"/>
    </location>
    <ligand>
        <name>Zn(2+)</name>
        <dbReference type="ChEBI" id="CHEBI:29105"/>
    </ligand>
</feature>
<feature type="binding site" evidence="1">
    <location>
        <position position="674"/>
    </location>
    <ligand>
        <name>Zn(2+)</name>
        <dbReference type="ChEBI" id="CHEBI:29105"/>
    </ligand>
</feature>
<feature type="binding site" evidence="1">
    <location>
        <position position="680"/>
    </location>
    <ligand>
        <name>Zn(2+)</name>
        <dbReference type="ChEBI" id="CHEBI:29105"/>
    </ligand>
</feature>
<feature type="modified residue" description="Phosphoserine" evidence="19">
    <location>
        <position position="59"/>
    </location>
</feature>
<feature type="modified residue" description="Phosphoserine" evidence="19">
    <location>
        <position position="84"/>
    </location>
</feature>
<feature type="modified residue" description="Phosphoserine" evidence="20">
    <location>
        <position position="235"/>
    </location>
</feature>
<feature type="modified residue" description="Phosphoserine" evidence="20">
    <location>
        <position position="623"/>
    </location>
</feature>
<feature type="mutagenesis site" description="Defective for interaction with CDC5." evidence="15">
    <original>R</original>
    <variation>A</variation>
    <variation>E</variation>
    <location>
        <position position="83"/>
    </location>
</feature>
<feature type="mutagenesis site" description="No effect." evidence="15">
    <original>S</original>
    <variation>A</variation>
    <location>
        <position position="84"/>
    </location>
</feature>
<feature type="mutagenesis site" description="Defective for interaction with CDC5." evidence="15">
    <original>I</original>
    <variation>A</variation>
    <location>
        <position position="85"/>
    </location>
</feature>
<feature type="mutagenesis site" description="No effect." evidence="15">
    <original>E</original>
    <variation>K</variation>
    <location>
        <position position="86"/>
    </location>
</feature>
<feature type="mutagenesis site" description="Defective for interaction with CDC5." evidence="15">
    <original>G</original>
    <variation>A</variation>
    <location>
        <position position="87"/>
    </location>
</feature>
<feature type="mutagenesis site" description="Defective for interaction with CDC5." evidence="15">
    <original>A</original>
    <variation>V</variation>
    <location>
        <position position="88"/>
    </location>
</feature>
<feature type="mutagenesis site" description="In DBF4-AAHH; weakens interaction with ARS1 origin DNA and MCM2, but not other known ligands; when associated with A-664." evidence="14">
    <original>C</original>
    <variation>A</variation>
    <location>
        <position position="661"/>
    </location>
</feature>
<feature type="mutagenesis site" description="In DBF4-AAHH; weakens interaction with ARS1 origin DNA and MCM2, but not other known ligands; when associated with A-661." evidence="14">
    <original>C</original>
    <variation>A</variation>
    <location>
        <position position="664"/>
    </location>
</feature>
<feature type="mutagenesis site" description="In DBF4-CCAA; weakens interaction with ARS1 origin DNA and MCM2, but not other known ligands; when associated with A-680." evidence="14">
    <original>H</original>
    <variation>A</variation>
    <location>
        <position position="674"/>
    </location>
</feature>
<feature type="mutagenesis site" description="Weakens interaction with ARS1 origin DNA and MCM2, but not other known ligands. In DBF4-CCAA; weakens interaction with ARS1 origin DNA and MCM2, but not other known ligands; when associated with A-674." evidence="14">
    <original>H</original>
    <variation>A</variation>
    <location>
        <position position="680"/>
    </location>
</feature>
<feature type="mutagenesis site" description="Weakens interaction with ARS1 origin DNA and MCM2, but not other known ligands." evidence="14">
    <original>H</original>
    <variation>C</variation>
    <location>
        <position position="680"/>
    </location>
</feature>
<feature type="sequence conflict" description="In Ref. 1; CAA42819." evidence="18" ref="1">
    <original>GA</original>
    <variation>NT</variation>
    <location>
        <begin position="159"/>
        <end position="160"/>
    </location>
</feature>
<feature type="sequence conflict" description="In Ref. 1; CAA42819." evidence="18" ref="1">
    <original>R</original>
    <variation>RR</variation>
    <location>
        <position position="177"/>
    </location>
</feature>
<feature type="sequence conflict" description="In Ref. 1; CAA42819." evidence="18" ref="1">
    <original>N</original>
    <variation>K</variation>
    <location>
        <position position="197"/>
    </location>
</feature>
<feature type="sequence conflict" description="In Ref. 1; CAA42819." evidence="18" ref="1">
    <original>D</original>
    <variation>G</variation>
    <location>
        <position position="256"/>
    </location>
</feature>
<feature type="sequence conflict" description="In Ref. 1; CAA42819." evidence="18" ref="1">
    <location>
        <begin position="416"/>
        <end position="425"/>
    </location>
</feature>
<feature type="sequence conflict" description="In Ref. 1; CAA42819." evidence="18" ref="1">
    <original>Q</original>
    <variation>R</variation>
    <location>
        <position position="439"/>
    </location>
</feature>
<feature type="strand" evidence="23">
    <location>
        <begin position="86"/>
        <end position="90"/>
    </location>
</feature>
<feature type="helix" evidence="22">
    <location>
        <begin position="106"/>
        <end position="122"/>
    </location>
</feature>
<feature type="strand" evidence="21">
    <location>
        <begin position="125"/>
        <end position="128"/>
    </location>
</feature>
<feature type="helix" evidence="21">
    <location>
        <begin position="138"/>
        <end position="157"/>
    </location>
</feature>
<feature type="strand" evidence="21">
    <location>
        <begin position="161"/>
        <end position="165"/>
    </location>
</feature>
<feature type="strand" evidence="21">
    <location>
        <begin position="172"/>
        <end position="177"/>
    </location>
</feature>
<feature type="helix" evidence="21">
    <location>
        <begin position="179"/>
        <end position="184"/>
    </location>
</feature>
<feature type="helix" evidence="21">
    <location>
        <begin position="190"/>
        <end position="196"/>
    </location>
</feature>
<feature type="strand" evidence="21">
    <location>
        <begin position="200"/>
        <end position="203"/>
    </location>
</feature>
<feature type="helix" evidence="21">
    <location>
        <begin position="204"/>
        <end position="213"/>
    </location>
</feature>
<feature type="helix" evidence="21">
    <location>
        <begin position="218"/>
        <end position="221"/>
    </location>
</feature>
<feature type="helix" evidence="21">
    <location>
        <begin position="233"/>
        <end position="241"/>
    </location>
</feature>
<name>DBF4_YEAST</name>
<comment type="function">
    <text evidence="5 6 7 8 9 10 11 12 13 14 15 16">Regulatory subunit of the CDC7-DBF4 kinase, also called DBF4-dependent kinase (DDK), which is involved in cell cycle regulation of premitotic and premeiotic chromosome replication and in chromosome segregation. DDK plays an essential role in initiating DNA replication at replication origins by phosphorylating the MCM2 and MCM4 subunits of the MCM2-7 helicase complex. DBF4 recruits the catalytic subunit CDC7 to MCM2 and to origins of replication. DDK also has postreplicative functions in meiosis. DDK phosphorylates the meiosis-specific double-strand break protein MER2 for initiation of meiotic recombination. Interacts with CDC5 during meiosis to promote double-strand breaks and monopolar spindle orientation. Inhibits CDC5 activity during mitosis through direct binding to its PBD.</text>
</comment>
<comment type="subunit">
    <text evidence="5 10 11 13 15 17">Heterodimer with CDC7 to form the DBF4-dependent kinase (DDK) complex. Interacts (via PBD-binding motif) with CDC5 (via POLO box domains). Interacts (via N-terminus) with ORC2, ORC3 and RAD53. Binds to ARS1 origin DNA.</text>
</comment>
<comment type="interaction">
    <interactant intactId="EBI-5575">
        <id>P32325</id>
    </interactant>
    <interactant intactId="EBI-4451">
        <id>P06243</id>
        <label>CDC7</label>
    </interactant>
    <organismsDiffer>false</organismsDiffer>
    <experiments>9</experiments>
</comment>
<comment type="induction">
    <text evidence="3 4">Cell cycle-regulated. Protein levels increase as cells begin S phase and remain high through late mitosis.</text>
</comment>
<comment type="PTM">
    <text evidence="17">Phosphorylated by CDC7 and by CDC5.</text>
</comment>
<accession>P32325</accession>
<accession>D6VS39</accession>
<accession>P32355</accession>